<name>DMS8_PHYTS</name>
<dbReference type="SMR" id="P84928"/>
<dbReference type="GO" id="GO:0005576">
    <property type="term" value="C:extracellular region"/>
    <property type="evidence" value="ECO:0007669"/>
    <property type="project" value="UniProtKB-SubCell"/>
</dbReference>
<dbReference type="GO" id="GO:0042742">
    <property type="term" value="P:defense response to bacterium"/>
    <property type="evidence" value="ECO:0007669"/>
    <property type="project" value="UniProtKB-KW"/>
</dbReference>
<dbReference type="GO" id="GO:0031640">
    <property type="term" value="P:killing of cells of another organism"/>
    <property type="evidence" value="ECO:0007669"/>
    <property type="project" value="UniProtKB-KW"/>
</dbReference>
<organism>
    <name type="scientific">Phyllomedusa tarsius</name>
    <name type="common">Brownbelly leaf frog</name>
    <name type="synonym">Phyllomedusa tarsia</name>
    <dbReference type="NCBI Taxonomy" id="306084"/>
    <lineage>
        <taxon>Eukaryota</taxon>
        <taxon>Metazoa</taxon>
        <taxon>Chordata</taxon>
        <taxon>Craniata</taxon>
        <taxon>Vertebrata</taxon>
        <taxon>Euteleostomi</taxon>
        <taxon>Amphibia</taxon>
        <taxon>Batrachia</taxon>
        <taxon>Anura</taxon>
        <taxon>Neobatrachia</taxon>
        <taxon>Hyloidea</taxon>
        <taxon>Hylidae</taxon>
        <taxon>Phyllomedusinae</taxon>
        <taxon>Phyllomedusa</taxon>
    </lineage>
</organism>
<comment type="function">
    <text evidence="2">Antimicrobial peptide, active against the Gram-positive bacterium S.aureus, and the Gram-negative bacteriun E.coli. Has hemolytic activity at 432 uM.</text>
</comment>
<comment type="subcellular location">
    <subcellularLocation>
        <location evidence="2">Secreted</location>
    </subcellularLocation>
</comment>
<comment type="tissue specificity">
    <text evidence="2">Expressed by the skin glands.</text>
</comment>
<comment type="mass spectrometry" mass="3242.83" error="0.1" method="MALDI" evidence="2"/>
<comment type="similarity">
    <text evidence="1">Belongs to the frog skin active peptide (FSAP) family. Dermaseptin subfamily.</text>
</comment>
<feature type="peptide" id="PRO_0000376040" description="Dermaseptin-8" evidence="2">
    <location>
        <begin position="1"/>
        <end position="32"/>
    </location>
</feature>
<feature type="modified residue" description="Glutamine amide" evidence="2">
    <location>
        <position position="32"/>
    </location>
</feature>
<keyword id="KW-0027">Amidation</keyword>
<keyword id="KW-0878">Amphibian defense peptide</keyword>
<keyword id="KW-0044">Antibiotic</keyword>
<keyword id="KW-0929">Antimicrobial</keyword>
<keyword id="KW-0204">Cytolysis</keyword>
<keyword id="KW-0903">Direct protein sequencing</keyword>
<keyword id="KW-0354">Hemolysis</keyword>
<keyword id="KW-0964">Secreted</keyword>
<proteinExistence type="evidence at protein level"/>
<evidence type="ECO:0000255" key="1"/>
<evidence type="ECO:0000269" key="2">
    <source ref="1"/>
</evidence>
<evidence type="ECO:0000303" key="3">
    <source ref="1"/>
</evidence>
<evidence type="ECO:0000305" key="4"/>
<protein>
    <recommendedName>
        <fullName evidence="3">Dermaseptin-8</fullName>
        <shortName evidence="3">DStar 08</shortName>
    </recommendedName>
</protein>
<accession>P84928</accession>
<sequence length="32" mass="3245">SLRGFLKGVGTALAGVGKVVADQFDKLLQAGQ</sequence>
<reference evidence="4" key="1">
    <citation type="submission" date="2006-08" db="UniProtKB">
        <title>Dermaseptins and phylloseptins from Phyllomedusa tarsius (Amphibia).</title>
        <authorList>
            <person name="Prates M.V."/>
            <person name="Jardim D.P."/>
            <person name="Silva L.P."/>
            <person name="Gordo M."/>
            <person name="Leite J.R.S.A."/>
            <person name="Figueredo R.C.R."/>
            <person name="Amaral A.C."/>
            <person name="Felipe M.S.S."/>
            <person name="Bloch C. Jr."/>
        </authorList>
    </citation>
    <scope>PROTEIN SEQUENCE</scope>
    <scope>FUNCTION</scope>
    <scope>SUBCELLULAR LOCATION</scope>
    <scope>TISSUE SPECIFICITY</scope>
    <scope>MASS SPECTROMETRY</scope>
    <scope>AMIDATION AT GLN-32</scope>
    <source>
        <tissue evidence="2">Skin secretion</tissue>
    </source>
</reference>